<name>HEYL_DANRE</name>
<feature type="chain" id="PRO_0000286431" description="Hairy/enhancer-of-split related with YRPW motif-like protein">
    <location>
        <begin position="1"/>
        <end position="310"/>
    </location>
</feature>
<feature type="domain" description="bHLH" evidence="3">
    <location>
        <begin position="43"/>
        <end position="98"/>
    </location>
</feature>
<feature type="domain" description="Orange" evidence="2">
    <location>
        <begin position="116"/>
        <end position="152"/>
    </location>
</feature>
<feature type="region of interest" description="Disordered" evidence="4">
    <location>
        <begin position="1"/>
        <end position="21"/>
    </location>
</feature>
<feature type="region of interest" description="Disordered" evidence="4">
    <location>
        <begin position="182"/>
        <end position="208"/>
    </location>
</feature>
<feature type="region of interest" description="Disordered" evidence="4">
    <location>
        <begin position="248"/>
        <end position="310"/>
    </location>
</feature>
<feature type="compositionally biased region" description="Acidic residues" evidence="4">
    <location>
        <begin position="12"/>
        <end position="21"/>
    </location>
</feature>
<feature type="compositionally biased region" description="Low complexity" evidence="4">
    <location>
        <begin position="182"/>
        <end position="192"/>
    </location>
</feature>
<feature type="compositionally biased region" description="Low complexity" evidence="4">
    <location>
        <begin position="261"/>
        <end position="273"/>
    </location>
</feature>
<feature type="compositionally biased region" description="Polar residues" evidence="4">
    <location>
        <begin position="293"/>
        <end position="302"/>
    </location>
</feature>
<feature type="sequence conflict" description="In Ref. 1; CAD53343." evidence="6" ref="1">
    <original>A</original>
    <variation>T</variation>
    <location>
        <position position="203"/>
    </location>
</feature>
<organism>
    <name type="scientific">Danio rerio</name>
    <name type="common">Zebrafish</name>
    <name type="synonym">Brachydanio rerio</name>
    <dbReference type="NCBI Taxonomy" id="7955"/>
    <lineage>
        <taxon>Eukaryota</taxon>
        <taxon>Metazoa</taxon>
        <taxon>Chordata</taxon>
        <taxon>Craniata</taxon>
        <taxon>Vertebrata</taxon>
        <taxon>Euteleostomi</taxon>
        <taxon>Actinopterygii</taxon>
        <taxon>Neopterygii</taxon>
        <taxon>Teleostei</taxon>
        <taxon>Ostariophysi</taxon>
        <taxon>Cypriniformes</taxon>
        <taxon>Danionidae</taxon>
        <taxon>Danioninae</taxon>
        <taxon>Danio</taxon>
    </lineage>
</organism>
<keyword id="KW-0217">Developmental protein</keyword>
<keyword id="KW-0238">DNA-binding</keyword>
<keyword id="KW-0914">Notch signaling pathway</keyword>
<keyword id="KW-0539">Nucleus</keyword>
<keyword id="KW-1185">Reference proteome</keyword>
<keyword id="KW-0678">Repressor</keyword>
<keyword id="KW-0804">Transcription</keyword>
<keyword id="KW-0805">Transcription regulation</keyword>
<dbReference type="EMBL" id="AJ510222">
    <property type="protein sequence ID" value="CAD53343.1"/>
    <property type="molecule type" value="mRNA"/>
</dbReference>
<dbReference type="EMBL" id="CR318628">
    <property type="protein sequence ID" value="CAK05162.1"/>
    <property type="molecule type" value="Genomic_DNA"/>
</dbReference>
<dbReference type="RefSeq" id="NP_859425.1">
    <property type="nucleotide sequence ID" value="NM_181736.1"/>
</dbReference>
<dbReference type="SMR" id="Q8AXV5"/>
<dbReference type="FunCoup" id="Q8AXV5">
    <property type="interactions" value="79"/>
</dbReference>
<dbReference type="STRING" id="7955.ENSDARP00000072659"/>
<dbReference type="PaxDb" id="7955-ENSDARP00000072659"/>
<dbReference type="Ensembl" id="ENSDART00000078197">
    <property type="protein sequence ID" value="ENSDARP00000072659"/>
    <property type="gene ID" value="ENSDARG00000055798"/>
</dbReference>
<dbReference type="Ensembl" id="ENSDART00000181837">
    <property type="protein sequence ID" value="ENSDARP00000151424"/>
    <property type="gene ID" value="ENSDARG00000112770"/>
</dbReference>
<dbReference type="GeneID" id="335134"/>
<dbReference type="KEGG" id="dre:335134"/>
<dbReference type="AGR" id="ZFIN:ZDB-GENE-030131-7074"/>
<dbReference type="CTD" id="26508"/>
<dbReference type="ZFIN" id="ZDB-GENE-030131-7074">
    <property type="gene designation" value="heyl"/>
</dbReference>
<dbReference type="eggNOG" id="KOG4304">
    <property type="taxonomic scope" value="Eukaryota"/>
</dbReference>
<dbReference type="HOGENOM" id="CLU_048294_1_1_1"/>
<dbReference type="InParanoid" id="Q8AXV5"/>
<dbReference type="OMA" id="GQEDGFC"/>
<dbReference type="OrthoDB" id="6371181at2759"/>
<dbReference type="PhylomeDB" id="Q8AXV5"/>
<dbReference type="TreeFam" id="TF351373"/>
<dbReference type="PRO" id="PR:Q8AXV5"/>
<dbReference type="Proteomes" id="UP000000437">
    <property type="component" value="Alternate scaffold 19"/>
</dbReference>
<dbReference type="Proteomes" id="UP000000437">
    <property type="component" value="Chromosome 19"/>
</dbReference>
<dbReference type="Bgee" id="ENSDARG00000055798">
    <property type="expression patterns" value="Expressed in spleen and 3 other cell types or tissues"/>
</dbReference>
<dbReference type="GO" id="GO:0005634">
    <property type="term" value="C:nucleus"/>
    <property type="evidence" value="ECO:0000318"/>
    <property type="project" value="GO_Central"/>
</dbReference>
<dbReference type="GO" id="GO:0046983">
    <property type="term" value="F:protein dimerization activity"/>
    <property type="evidence" value="ECO:0007669"/>
    <property type="project" value="InterPro"/>
</dbReference>
<dbReference type="GO" id="GO:0000978">
    <property type="term" value="F:RNA polymerase II cis-regulatory region sequence-specific DNA binding"/>
    <property type="evidence" value="ECO:0000318"/>
    <property type="project" value="GO_Central"/>
</dbReference>
<dbReference type="GO" id="GO:0007219">
    <property type="term" value="P:Notch signaling pathway"/>
    <property type="evidence" value="ECO:0007669"/>
    <property type="project" value="UniProtKB-KW"/>
</dbReference>
<dbReference type="GO" id="GO:0006355">
    <property type="term" value="P:regulation of DNA-templated transcription"/>
    <property type="evidence" value="ECO:0007669"/>
    <property type="project" value="InterPro"/>
</dbReference>
<dbReference type="GO" id="GO:0050767">
    <property type="term" value="P:regulation of neurogenesis"/>
    <property type="evidence" value="ECO:0000318"/>
    <property type="project" value="GO_Central"/>
</dbReference>
<dbReference type="FunFam" id="4.10.280.10:FF:000012">
    <property type="entry name" value="hairy/enhancer-of-split related with YRPW motif protein 1"/>
    <property type="match status" value="1"/>
</dbReference>
<dbReference type="Gene3D" id="6.10.250.980">
    <property type="match status" value="1"/>
</dbReference>
<dbReference type="Gene3D" id="4.10.280.10">
    <property type="entry name" value="Helix-loop-helix DNA-binding domain"/>
    <property type="match status" value="1"/>
</dbReference>
<dbReference type="InterPro" id="IPR011598">
    <property type="entry name" value="bHLH_dom"/>
</dbReference>
<dbReference type="InterPro" id="IPR050370">
    <property type="entry name" value="HES_HEY"/>
</dbReference>
<dbReference type="InterPro" id="IPR036638">
    <property type="entry name" value="HLH_DNA-bd_sf"/>
</dbReference>
<dbReference type="InterPro" id="IPR003650">
    <property type="entry name" value="Orange_dom"/>
</dbReference>
<dbReference type="PANTHER" id="PTHR10985">
    <property type="entry name" value="BASIC HELIX-LOOP-HELIX TRANSCRIPTION FACTOR, HES-RELATED"/>
    <property type="match status" value="1"/>
</dbReference>
<dbReference type="Pfam" id="PF07527">
    <property type="entry name" value="Hairy_orange"/>
    <property type="match status" value="1"/>
</dbReference>
<dbReference type="Pfam" id="PF00010">
    <property type="entry name" value="HLH"/>
    <property type="match status" value="1"/>
</dbReference>
<dbReference type="SMART" id="SM00353">
    <property type="entry name" value="HLH"/>
    <property type="match status" value="1"/>
</dbReference>
<dbReference type="SMART" id="SM00511">
    <property type="entry name" value="ORANGE"/>
    <property type="match status" value="1"/>
</dbReference>
<dbReference type="SUPFAM" id="SSF47459">
    <property type="entry name" value="HLH, helix-loop-helix DNA-binding domain"/>
    <property type="match status" value="1"/>
</dbReference>
<dbReference type="SUPFAM" id="SSF158457">
    <property type="entry name" value="Orange domain-like"/>
    <property type="match status" value="1"/>
</dbReference>
<dbReference type="PROSITE" id="PS50888">
    <property type="entry name" value="BHLH"/>
    <property type="match status" value="1"/>
</dbReference>
<dbReference type="PROSITE" id="PS51054">
    <property type="entry name" value="ORANGE"/>
    <property type="match status" value="1"/>
</dbReference>
<reference key="1">
    <citation type="journal article" date="2003" name="Dev. Genes Evol.">
        <title>Characterization of hey bHLH genes in teleost fish.</title>
        <authorList>
            <person name="Winkler C."/>
            <person name="Elmasri H."/>
            <person name="Klamt B."/>
            <person name="Volff J.-N."/>
            <person name="Gessler M."/>
        </authorList>
    </citation>
    <scope>NUCLEOTIDE SEQUENCE [MRNA]</scope>
    <scope>DEVELOPMENTAL STAGE</scope>
</reference>
<reference key="2">
    <citation type="journal article" date="2013" name="Nature">
        <title>The zebrafish reference genome sequence and its relationship to the human genome.</title>
        <authorList>
            <person name="Howe K."/>
            <person name="Clark M.D."/>
            <person name="Torroja C.F."/>
            <person name="Torrance J."/>
            <person name="Berthelot C."/>
            <person name="Muffato M."/>
            <person name="Collins J.E."/>
            <person name="Humphray S."/>
            <person name="McLaren K."/>
            <person name="Matthews L."/>
            <person name="McLaren S."/>
            <person name="Sealy I."/>
            <person name="Caccamo M."/>
            <person name="Churcher C."/>
            <person name="Scott C."/>
            <person name="Barrett J.C."/>
            <person name="Koch R."/>
            <person name="Rauch G.J."/>
            <person name="White S."/>
            <person name="Chow W."/>
            <person name="Kilian B."/>
            <person name="Quintais L.T."/>
            <person name="Guerra-Assuncao J.A."/>
            <person name="Zhou Y."/>
            <person name="Gu Y."/>
            <person name="Yen J."/>
            <person name="Vogel J.H."/>
            <person name="Eyre T."/>
            <person name="Redmond S."/>
            <person name="Banerjee R."/>
            <person name="Chi J."/>
            <person name="Fu B."/>
            <person name="Langley E."/>
            <person name="Maguire S.F."/>
            <person name="Laird G.K."/>
            <person name="Lloyd D."/>
            <person name="Kenyon E."/>
            <person name="Donaldson S."/>
            <person name="Sehra H."/>
            <person name="Almeida-King J."/>
            <person name="Loveland J."/>
            <person name="Trevanion S."/>
            <person name="Jones M."/>
            <person name="Quail M."/>
            <person name="Willey D."/>
            <person name="Hunt A."/>
            <person name="Burton J."/>
            <person name="Sims S."/>
            <person name="McLay K."/>
            <person name="Plumb B."/>
            <person name="Davis J."/>
            <person name="Clee C."/>
            <person name="Oliver K."/>
            <person name="Clark R."/>
            <person name="Riddle C."/>
            <person name="Elliot D."/>
            <person name="Threadgold G."/>
            <person name="Harden G."/>
            <person name="Ware D."/>
            <person name="Begum S."/>
            <person name="Mortimore B."/>
            <person name="Kerry G."/>
            <person name="Heath P."/>
            <person name="Phillimore B."/>
            <person name="Tracey A."/>
            <person name="Corby N."/>
            <person name="Dunn M."/>
            <person name="Johnson C."/>
            <person name="Wood J."/>
            <person name="Clark S."/>
            <person name="Pelan S."/>
            <person name="Griffiths G."/>
            <person name="Smith M."/>
            <person name="Glithero R."/>
            <person name="Howden P."/>
            <person name="Barker N."/>
            <person name="Lloyd C."/>
            <person name="Stevens C."/>
            <person name="Harley J."/>
            <person name="Holt K."/>
            <person name="Panagiotidis G."/>
            <person name="Lovell J."/>
            <person name="Beasley H."/>
            <person name="Henderson C."/>
            <person name="Gordon D."/>
            <person name="Auger K."/>
            <person name="Wright D."/>
            <person name="Collins J."/>
            <person name="Raisen C."/>
            <person name="Dyer L."/>
            <person name="Leung K."/>
            <person name="Robertson L."/>
            <person name="Ambridge K."/>
            <person name="Leongamornlert D."/>
            <person name="McGuire S."/>
            <person name="Gilderthorp R."/>
            <person name="Griffiths C."/>
            <person name="Manthravadi D."/>
            <person name="Nichol S."/>
            <person name="Barker G."/>
            <person name="Whitehead S."/>
            <person name="Kay M."/>
            <person name="Brown J."/>
            <person name="Murnane C."/>
            <person name="Gray E."/>
            <person name="Humphries M."/>
            <person name="Sycamore N."/>
            <person name="Barker D."/>
            <person name="Saunders D."/>
            <person name="Wallis J."/>
            <person name="Babbage A."/>
            <person name="Hammond S."/>
            <person name="Mashreghi-Mohammadi M."/>
            <person name="Barr L."/>
            <person name="Martin S."/>
            <person name="Wray P."/>
            <person name="Ellington A."/>
            <person name="Matthews N."/>
            <person name="Ellwood M."/>
            <person name="Woodmansey R."/>
            <person name="Clark G."/>
            <person name="Cooper J."/>
            <person name="Tromans A."/>
            <person name="Grafham D."/>
            <person name="Skuce C."/>
            <person name="Pandian R."/>
            <person name="Andrews R."/>
            <person name="Harrison E."/>
            <person name="Kimberley A."/>
            <person name="Garnett J."/>
            <person name="Fosker N."/>
            <person name="Hall R."/>
            <person name="Garner P."/>
            <person name="Kelly D."/>
            <person name="Bird C."/>
            <person name="Palmer S."/>
            <person name="Gehring I."/>
            <person name="Berger A."/>
            <person name="Dooley C.M."/>
            <person name="Ersan-Urun Z."/>
            <person name="Eser C."/>
            <person name="Geiger H."/>
            <person name="Geisler M."/>
            <person name="Karotki L."/>
            <person name="Kirn A."/>
            <person name="Konantz J."/>
            <person name="Konantz M."/>
            <person name="Oberlander M."/>
            <person name="Rudolph-Geiger S."/>
            <person name="Teucke M."/>
            <person name="Lanz C."/>
            <person name="Raddatz G."/>
            <person name="Osoegawa K."/>
            <person name="Zhu B."/>
            <person name="Rapp A."/>
            <person name="Widaa S."/>
            <person name="Langford C."/>
            <person name="Yang F."/>
            <person name="Schuster S.C."/>
            <person name="Carter N.P."/>
            <person name="Harrow J."/>
            <person name="Ning Z."/>
            <person name="Herrero J."/>
            <person name="Searle S.M."/>
            <person name="Enright A."/>
            <person name="Geisler R."/>
            <person name="Plasterk R.H."/>
            <person name="Lee C."/>
            <person name="Westerfield M."/>
            <person name="de Jong P.J."/>
            <person name="Zon L.I."/>
            <person name="Postlethwait J.H."/>
            <person name="Nusslein-Volhard C."/>
            <person name="Hubbard T.J."/>
            <person name="Roest Crollius H."/>
            <person name="Rogers J."/>
            <person name="Stemple D.L."/>
        </authorList>
    </citation>
    <scope>NUCLEOTIDE SEQUENCE [LARGE SCALE GENOMIC DNA]</scope>
    <source>
        <strain>Tuebingen</strain>
    </source>
</reference>
<sequence length="310" mass="33392">MKRPHDYSSPDSDTDELIDVGQEDSYCPVTGSMSPGSTSQILARKKRRGIIEKRRRDRINHSLSELRRLVPSAFEKQGSSKLEKAEILQMTVDHLKLLHAMGGKGYFDARALAVDYRTLGFRECVGEVVRYLSSLEGVESSDPIGARLVSHLSHCASELDPLLQSPAALPFPPWPWASFPQLQAASPPASSTPFPPNARRDLAPHGTATILGYPSPALRMGSLSTQGTILNPALTSVRQLPSVPGHLHRLQQHSPEGRTVPSSSSSSSNSSPPQISFRPFVPAGSPAGGRRALSSSSKSAQAWGTEIGAF</sequence>
<gene>
    <name type="primary">heyl</name>
    <name type="ORF">si:dkey-148n22.1</name>
</gene>
<proteinExistence type="evidence at transcript level"/>
<accession>Q8AXV5</accession>
<accession>Q1L9E8</accession>
<protein>
    <recommendedName>
        <fullName>Hairy/enhancer-of-split related with YRPW motif-like protein</fullName>
    </recommendedName>
</protein>
<comment type="function">
    <text evidence="1">Transcriptional repressor which functions as a downstream effector of Notch signaling.</text>
</comment>
<comment type="subcellular location">
    <subcellularLocation>
        <location evidence="2 3">Nucleus</location>
    </subcellularLocation>
</comment>
<comment type="developmental stage">
    <text evidence="5">Expressed at low levels during embryogenesis. Expressed in the ventral fin fold of the forming and extending tailbud and in the ventral regions of the neural tube.</text>
</comment>
<comment type="similarity">
    <text evidence="6">Belongs to the HEY family.</text>
</comment>
<evidence type="ECO:0000250" key="1"/>
<evidence type="ECO:0000255" key="2">
    <source>
        <dbReference type="PROSITE-ProRule" id="PRU00380"/>
    </source>
</evidence>
<evidence type="ECO:0000255" key="3">
    <source>
        <dbReference type="PROSITE-ProRule" id="PRU00981"/>
    </source>
</evidence>
<evidence type="ECO:0000256" key="4">
    <source>
        <dbReference type="SAM" id="MobiDB-lite"/>
    </source>
</evidence>
<evidence type="ECO:0000269" key="5">
    <source>
    </source>
</evidence>
<evidence type="ECO:0000305" key="6"/>